<comment type="function">
    <text evidence="1">NDH shuttles electrons from NAD(P)H:plastoquinone, via FMN and iron-sulfur (Fe-S) centers, to quinones in the photosynthetic chain and possibly in a chloroplast respiratory chain. The immediate electron acceptor for the enzyme in this species is believed to be plastoquinone. Couples the redox reaction to proton translocation, and thus conserves the redox energy in a proton gradient (By similarity).</text>
</comment>
<comment type="catalytic activity">
    <reaction>
        <text>a plastoquinone + NADH + (n+1) H(+)(in) = a plastoquinol + NAD(+) + n H(+)(out)</text>
        <dbReference type="Rhea" id="RHEA:42608"/>
        <dbReference type="Rhea" id="RHEA-COMP:9561"/>
        <dbReference type="Rhea" id="RHEA-COMP:9562"/>
        <dbReference type="ChEBI" id="CHEBI:15378"/>
        <dbReference type="ChEBI" id="CHEBI:17757"/>
        <dbReference type="ChEBI" id="CHEBI:57540"/>
        <dbReference type="ChEBI" id="CHEBI:57945"/>
        <dbReference type="ChEBI" id="CHEBI:62192"/>
    </reaction>
</comment>
<comment type="catalytic activity">
    <reaction>
        <text>a plastoquinone + NADPH + (n+1) H(+)(in) = a plastoquinol + NADP(+) + n H(+)(out)</text>
        <dbReference type="Rhea" id="RHEA:42612"/>
        <dbReference type="Rhea" id="RHEA-COMP:9561"/>
        <dbReference type="Rhea" id="RHEA-COMP:9562"/>
        <dbReference type="ChEBI" id="CHEBI:15378"/>
        <dbReference type="ChEBI" id="CHEBI:17757"/>
        <dbReference type="ChEBI" id="CHEBI:57783"/>
        <dbReference type="ChEBI" id="CHEBI:58349"/>
        <dbReference type="ChEBI" id="CHEBI:62192"/>
    </reaction>
</comment>
<comment type="subunit">
    <text evidence="1">NDH is composed of at least 16 different subunits, 5 of which are encoded in the nucleus.</text>
</comment>
<comment type="subcellular location">
    <subcellularLocation>
        <location evidence="1">Plastid</location>
        <location evidence="1">Chloroplast thylakoid membrane</location>
        <topology evidence="1">Multi-pass membrane protein</topology>
    </subcellularLocation>
</comment>
<comment type="similarity">
    <text evidence="3">Belongs to the complex I subunit 5 family.</text>
</comment>
<evidence type="ECO:0000250" key="1"/>
<evidence type="ECO:0000255" key="2"/>
<evidence type="ECO:0000305" key="3"/>
<sequence length="752" mass="85345">MEHIYQYSWIIPFVTLPVPMLIGAGLLLFPAATKKLRRMWAFPSVFLLSIVMIFSIDLSIQQINSSFIYQYIWSWTINNDFSLEFGHLIDPLTSILSVLITTVGILVLFYSDNYMSHDQGYLRFFAYMSFFTTSMLGLVTSSNLIQIYIFWELVGVCSYLLIGFWFTRPIASNACQKAFVTNRVGDFGLLLGILGLYWITGSFEFRDLFKIFNNLIYNNQVNFLFVTLCAVLLFSGAIAKSAQFPLHVWLPDAMEGPTPISALIHAATMVAAGIFLVARLFPLFVIIPFIMNLIALIGIITVFLGATLALAQKDIKRSLAYSTMSQLGYMMLALGMGSYRAALFHLITHAYSKALLFLGSGSIIHSMEAILGYSPDKSQNMVLMGGLTKHIPITKTAFLLGTLSLCGIPPFACFWSKDEILNDSWLYSPIFAIIACFTAGLTAFYMFRVYLLTFDGHFNAHFQSYSGKKNSSFYSISLWGKEGSKMLNKNLRLLALLTMNNKERASFFWKNTYQIDGNVRNMTWPFITIQNFNTKRIFSYPHESDNTMLFPMLILVLFTLFIGAIGIPFNQFNQEGMLLDIDILSKLLTPSLNLLHQNPENSVDWYEFVTNATFSASIAFFGIFIASFLYKPVYSSLQNLNFFNSFAKKGPKRILWDKIINVIYNWSSNRGYIDAFYAISFIGGIRKLAELIHFFDKQIIDGTPNGVGVTSFFVGEGIKNVGSGRISFYLLFYLFYALIFLLIYYSVYKFII</sequence>
<dbReference type="EC" id="7.1.1.-"/>
<dbReference type="EMBL" id="EU117376">
    <property type="protein sequence ID" value="ABV66200.1"/>
    <property type="molecule type" value="Genomic_DNA"/>
</dbReference>
<dbReference type="RefSeq" id="YP_001718483.1">
    <property type="nucleotide sequence ID" value="NC_010433.1"/>
</dbReference>
<dbReference type="SMR" id="B1NWJ6"/>
<dbReference type="GeneID" id="6000055"/>
<dbReference type="KEGG" id="mesc:6000055"/>
<dbReference type="OrthoDB" id="831889at2759"/>
<dbReference type="GO" id="GO:0009535">
    <property type="term" value="C:chloroplast thylakoid membrane"/>
    <property type="evidence" value="ECO:0007669"/>
    <property type="project" value="UniProtKB-SubCell"/>
</dbReference>
<dbReference type="GO" id="GO:0008137">
    <property type="term" value="F:NADH dehydrogenase (ubiquinone) activity"/>
    <property type="evidence" value="ECO:0007669"/>
    <property type="project" value="InterPro"/>
</dbReference>
<dbReference type="GO" id="GO:0048038">
    <property type="term" value="F:quinone binding"/>
    <property type="evidence" value="ECO:0007669"/>
    <property type="project" value="UniProtKB-KW"/>
</dbReference>
<dbReference type="GO" id="GO:0042773">
    <property type="term" value="P:ATP synthesis coupled electron transport"/>
    <property type="evidence" value="ECO:0007669"/>
    <property type="project" value="InterPro"/>
</dbReference>
<dbReference type="Gene3D" id="1.20.5.2700">
    <property type="match status" value="1"/>
</dbReference>
<dbReference type="InterPro" id="IPR002128">
    <property type="entry name" value="NADH_UbQ_OxRdtase_chlpt_su5_C"/>
</dbReference>
<dbReference type="InterPro" id="IPR018393">
    <property type="entry name" value="NADHpl_OxRdtase_5_subgr"/>
</dbReference>
<dbReference type="InterPro" id="IPR001750">
    <property type="entry name" value="ND/Mrp_TM"/>
</dbReference>
<dbReference type="InterPro" id="IPR003945">
    <property type="entry name" value="NU5C-like"/>
</dbReference>
<dbReference type="InterPro" id="IPR001516">
    <property type="entry name" value="Proton_antipo_N"/>
</dbReference>
<dbReference type="NCBIfam" id="TIGR01974">
    <property type="entry name" value="NDH_I_L"/>
    <property type="match status" value="1"/>
</dbReference>
<dbReference type="NCBIfam" id="NF005141">
    <property type="entry name" value="PRK06590.1"/>
    <property type="match status" value="1"/>
</dbReference>
<dbReference type="PANTHER" id="PTHR42829">
    <property type="entry name" value="NADH-UBIQUINONE OXIDOREDUCTASE CHAIN 5"/>
    <property type="match status" value="1"/>
</dbReference>
<dbReference type="PANTHER" id="PTHR42829:SF2">
    <property type="entry name" value="NADH-UBIQUINONE OXIDOREDUCTASE CHAIN 5"/>
    <property type="match status" value="1"/>
</dbReference>
<dbReference type="Pfam" id="PF01010">
    <property type="entry name" value="Proton_antipo_C"/>
    <property type="match status" value="1"/>
</dbReference>
<dbReference type="Pfam" id="PF00361">
    <property type="entry name" value="Proton_antipo_M"/>
    <property type="match status" value="1"/>
</dbReference>
<dbReference type="Pfam" id="PF00662">
    <property type="entry name" value="Proton_antipo_N"/>
    <property type="match status" value="1"/>
</dbReference>
<dbReference type="PRINTS" id="PR01434">
    <property type="entry name" value="NADHDHGNASE5"/>
</dbReference>
<dbReference type="PRINTS" id="PR01435">
    <property type="entry name" value="NPOXDRDTASE5"/>
</dbReference>
<name>NU5C_MANES</name>
<protein>
    <recommendedName>
        <fullName>NAD(P)H-quinone oxidoreductase subunit 5, chloroplastic</fullName>
        <ecNumber>7.1.1.-</ecNumber>
    </recommendedName>
    <alternativeName>
        <fullName>NAD(P)H dehydrogenase subunit 5</fullName>
    </alternativeName>
    <alternativeName>
        <fullName>NADH-plastoquinone oxidoreductase subunit 5</fullName>
    </alternativeName>
</protein>
<gene>
    <name type="primary">ndhF</name>
</gene>
<proteinExistence type="inferred from homology"/>
<reference key="1">
    <citation type="journal article" date="2008" name="Theor. Appl. Genet.">
        <title>The complete nucleotide sequence of the cassava (Manihot esculenta) chloroplast genome and the evolution of atpF in Malpighiales: RNA editing and multiple losses of a group II intron.</title>
        <authorList>
            <person name="Daniell H."/>
            <person name="Wurdack K.J."/>
            <person name="Kanagaraj A."/>
            <person name="Lee S.-B."/>
            <person name="Saski C."/>
            <person name="Jansen R.K."/>
        </authorList>
    </citation>
    <scope>NUCLEOTIDE SEQUENCE [LARGE SCALE GENOMIC DNA]</scope>
    <source>
        <strain>cv. TME3</strain>
    </source>
</reference>
<feature type="chain" id="PRO_0000360948" description="NAD(P)H-quinone oxidoreductase subunit 5, chloroplastic">
    <location>
        <begin position="1"/>
        <end position="752"/>
    </location>
</feature>
<feature type="transmembrane region" description="Helical" evidence="2">
    <location>
        <begin position="9"/>
        <end position="29"/>
    </location>
</feature>
<feature type="transmembrane region" description="Helical" evidence="2">
    <location>
        <begin position="40"/>
        <end position="60"/>
    </location>
</feature>
<feature type="transmembrane region" description="Helical" evidence="2">
    <location>
        <begin position="89"/>
        <end position="109"/>
    </location>
</feature>
<feature type="transmembrane region" description="Helical" evidence="2">
    <location>
        <begin position="125"/>
        <end position="145"/>
    </location>
</feature>
<feature type="transmembrane region" description="Helical" evidence="2">
    <location>
        <begin position="147"/>
        <end position="167"/>
    </location>
</feature>
<feature type="transmembrane region" description="Helical" evidence="2">
    <location>
        <begin position="185"/>
        <end position="205"/>
    </location>
</feature>
<feature type="transmembrane region" description="Helical" evidence="2">
    <location>
        <begin position="219"/>
        <end position="239"/>
    </location>
</feature>
<feature type="transmembrane region" description="Helical" evidence="2">
    <location>
        <begin position="258"/>
        <end position="278"/>
    </location>
</feature>
<feature type="transmembrane region" description="Helical" evidence="2">
    <location>
        <begin position="280"/>
        <end position="300"/>
    </location>
</feature>
<feature type="transmembrane region" description="Helical" evidence="2">
    <location>
        <begin position="327"/>
        <end position="347"/>
    </location>
</feature>
<feature type="transmembrane region" description="Helical" evidence="2">
    <location>
        <begin position="354"/>
        <end position="374"/>
    </location>
</feature>
<feature type="transmembrane region" description="Helical" evidence="2">
    <location>
        <begin position="396"/>
        <end position="416"/>
    </location>
</feature>
<feature type="transmembrane region" description="Helical" evidence="2">
    <location>
        <begin position="425"/>
        <end position="445"/>
    </location>
</feature>
<feature type="transmembrane region" description="Helical" evidence="2">
    <location>
        <begin position="549"/>
        <end position="569"/>
    </location>
</feature>
<feature type="transmembrane region" description="Helical" evidence="2">
    <location>
        <begin position="608"/>
        <end position="628"/>
    </location>
</feature>
<feature type="transmembrane region" description="Helical" evidence="2">
    <location>
        <begin position="728"/>
        <end position="748"/>
    </location>
</feature>
<accession>B1NWJ6</accession>
<organism>
    <name type="scientific">Manihot esculenta</name>
    <name type="common">Cassava</name>
    <name type="synonym">Jatropha manihot</name>
    <dbReference type="NCBI Taxonomy" id="3983"/>
    <lineage>
        <taxon>Eukaryota</taxon>
        <taxon>Viridiplantae</taxon>
        <taxon>Streptophyta</taxon>
        <taxon>Embryophyta</taxon>
        <taxon>Tracheophyta</taxon>
        <taxon>Spermatophyta</taxon>
        <taxon>Magnoliopsida</taxon>
        <taxon>eudicotyledons</taxon>
        <taxon>Gunneridae</taxon>
        <taxon>Pentapetalae</taxon>
        <taxon>rosids</taxon>
        <taxon>fabids</taxon>
        <taxon>Malpighiales</taxon>
        <taxon>Euphorbiaceae</taxon>
        <taxon>Crotonoideae</taxon>
        <taxon>Manihoteae</taxon>
        <taxon>Manihot</taxon>
    </lineage>
</organism>
<geneLocation type="chloroplast"/>
<keyword id="KW-0150">Chloroplast</keyword>
<keyword id="KW-0472">Membrane</keyword>
<keyword id="KW-0520">NAD</keyword>
<keyword id="KW-0521">NADP</keyword>
<keyword id="KW-0934">Plastid</keyword>
<keyword id="KW-0618">Plastoquinone</keyword>
<keyword id="KW-0874">Quinone</keyword>
<keyword id="KW-0793">Thylakoid</keyword>
<keyword id="KW-1278">Translocase</keyword>
<keyword id="KW-0812">Transmembrane</keyword>
<keyword id="KW-1133">Transmembrane helix</keyword>
<keyword id="KW-0813">Transport</keyword>